<reference key="1">
    <citation type="journal article" date="1998" name="Nature">
        <title>The complete genome of the hyperthermophilic bacterium Aquifex aeolicus.</title>
        <authorList>
            <person name="Deckert G."/>
            <person name="Warren P.V."/>
            <person name="Gaasterland T."/>
            <person name="Young W.G."/>
            <person name="Lenox A.L."/>
            <person name="Graham D.E."/>
            <person name="Overbeek R."/>
            <person name="Snead M.A."/>
            <person name="Keller M."/>
            <person name="Aujay M."/>
            <person name="Huber R."/>
            <person name="Feldman R.A."/>
            <person name="Short J.M."/>
            <person name="Olsen G.J."/>
            <person name="Swanson R.V."/>
        </authorList>
    </citation>
    <scope>NUCLEOTIDE SEQUENCE [LARGE SCALE GENOMIC DNA]</scope>
    <source>
        <strain>VF5</strain>
    </source>
</reference>
<sequence>MLIAFEGIDGSGKTTQAKKLYEYLKQKGYFVSLYREPGGTKVGEVLREILLTEELDERTELLLFEASRSKLIEEKIIPDLKRDKVVILDRFVLSTIAYQGYGKGLDVEFIKNLNEFATRGVKPDITLLLDIPVDIALRRLKEKNRFENKEFLEKVRKGFLELAKEEENVVVIDASGEEEEVFKEILRALSGVLRV</sequence>
<name>KTHY_AQUAE</name>
<proteinExistence type="evidence at protein level"/>
<protein>
    <recommendedName>
        <fullName>Thymidylate kinase</fullName>
        <ecNumber>2.7.4.9</ecNumber>
    </recommendedName>
    <alternativeName>
        <fullName>dTMP kinase</fullName>
    </alternativeName>
</protein>
<accession>O67099</accession>
<comment type="function">
    <text evidence="1">Phosphorylation of dTMP to form dTDP in both de novo and salvage pathways of dTTP synthesis.</text>
</comment>
<comment type="catalytic activity">
    <reaction>
        <text>dTMP + ATP = dTDP + ADP</text>
        <dbReference type="Rhea" id="RHEA:13517"/>
        <dbReference type="ChEBI" id="CHEBI:30616"/>
        <dbReference type="ChEBI" id="CHEBI:58369"/>
        <dbReference type="ChEBI" id="CHEBI:63528"/>
        <dbReference type="ChEBI" id="CHEBI:456216"/>
        <dbReference type="EC" id="2.7.4.9"/>
    </reaction>
</comment>
<comment type="similarity">
    <text evidence="3">Belongs to the thymidylate kinase family.</text>
</comment>
<evidence type="ECO:0000250" key="1"/>
<evidence type="ECO:0000255" key="2"/>
<evidence type="ECO:0000305" key="3"/>
<evidence type="ECO:0007829" key="4">
    <source>
        <dbReference type="PDB" id="4S35"/>
    </source>
</evidence>
<evidence type="ECO:0007829" key="5">
    <source>
        <dbReference type="PDB" id="5H56"/>
    </source>
</evidence>
<dbReference type="EC" id="2.7.4.9"/>
<dbReference type="EMBL" id="AE000657">
    <property type="protein sequence ID" value="AAC07063.1"/>
    <property type="molecule type" value="Genomic_DNA"/>
</dbReference>
<dbReference type="PIR" id="H70383">
    <property type="entry name" value="H70383"/>
</dbReference>
<dbReference type="RefSeq" id="NP_213662.1">
    <property type="nucleotide sequence ID" value="NC_000918.1"/>
</dbReference>
<dbReference type="RefSeq" id="WP_010880600.1">
    <property type="nucleotide sequence ID" value="NC_000918.1"/>
</dbReference>
<dbReference type="PDB" id="2PBR">
    <property type="method" value="X-ray"/>
    <property type="resolution" value="1.96 A"/>
    <property type="chains" value="A/B=1-195"/>
</dbReference>
<dbReference type="PDB" id="4S2E">
    <property type="method" value="X-ray"/>
    <property type="resolution" value="2.35 A"/>
    <property type="chains" value="A/B=1-195"/>
</dbReference>
<dbReference type="PDB" id="4S35">
    <property type="method" value="X-ray"/>
    <property type="resolution" value="1.55 A"/>
    <property type="chains" value="A/B=1-195"/>
</dbReference>
<dbReference type="PDB" id="5H56">
    <property type="method" value="X-ray"/>
    <property type="resolution" value="1.70 A"/>
    <property type="chains" value="A/B=1-195"/>
</dbReference>
<dbReference type="PDB" id="5H5B">
    <property type="method" value="X-ray"/>
    <property type="resolution" value="2.05 A"/>
    <property type="chains" value="A/B=1-195"/>
</dbReference>
<dbReference type="PDB" id="5H5K">
    <property type="method" value="X-ray"/>
    <property type="resolution" value="2.30 A"/>
    <property type="chains" value="A/B=1-195"/>
</dbReference>
<dbReference type="PDB" id="5XAI">
    <property type="method" value="X-ray"/>
    <property type="resolution" value="2.00 A"/>
    <property type="chains" value="A/B=1-195"/>
</dbReference>
<dbReference type="PDB" id="5XB2">
    <property type="method" value="X-ray"/>
    <property type="resolution" value="2.16 A"/>
    <property type="chains" value="A/B=1-195"/>
</dbReference>
<dbReference type="PDB" id="5XB3">
    <property type="method" value="X-ray"/>
    <property type="resolution" value="1.77 A"/>
    <property type="chains" value="A/B=1-195"/>
</dbReference>
<dbReference type="PDB" id="5XB5">
    <property type="method" value="X-ray"/>
    <property type="resolution" value="2.23 A"/>
    <property type="chains" value="A/B=1-195"/>
</dbReference>
<dbReference type="PDB" id="5XBH">
    <property type="method" value="X-ray"/>
    <property type="resolution" value="2.23 A"/>
    <property type="chains" value="A/B=1-195"/>
</dbReference>
<dbReference type="PDBsum" id="2PBR"/>
<dbReference type="PDBsum" id="4S2E"/>
<dbReference type="PDBsum" id="4S35"/>
<dbReference type="PDBsum" id="5H56"/>
<dbReference type="PDBsum" id="5H5B"/>
<dbReference type="PDBsum" id="5H5K"/>
<dbReference type="PDBsum" id="5XAI"/>
<dbReference type="PDBsum" id="5XB2"/>
<dbReference type="PDBsum" id="5XB3"/>
<dbReference type="PDBsum" id="5XB5"/>
<dbReference type="PDBsum" id="5XBH"/>
<dbReference type="SMR" id="O67099"/>
<dbReference type="FunCoup" id="O67099">
    <property type="interactions" value="405"/>
</dbReference>
<dbReference type="STRING" id="224324.aq_969"/>
<dbReference type="EnsemblBacteria" id="AAC07063">
    <property type="protein sequence ID" value="AAC07063"/>
    <property type="gene ID" value="aq_969"/>
</dbReference>
<dbReference type="KEGG" id="aae:aq_969"/>
<dbReference type="PATRIC" id="fig|224324.8.peg.762"/>
<dbReference type="eggNOG" id="COG0125">
    <property type="taxonomic scope" value="Bacteria"/>
</dbReference>
<dbReference type="HOGENOM" id="CLU_049131_0_2_0"/>
<dbReference type="InParanoid" id="O67099"/>
<dbReference type="OrthoDB" id="9774907at2"/>
<dbReference type="EvolutionaryTrace" id="O67099"/>
<dbReference type="Proteomes" id="UP000000798">
    <property type="component" value="Chromosome"/>
</dbReference>
<dbReference type="GO" id="GO:0005737">
    <property type="term" value="C:cytoplasm"/>
    <property type="evidence" value="ECO:0000318"/>
    <property type="project" value="GO_Central"/>
</dbReference>
<dbReference type="GO" id="GO:0005829">
    <property type="term" value="C:cytosol"/>
    <property type="evidence" value="ECO:0000318"/>
    <property type="project" value="GO_Central"/>
</dbReference>
<dbReference type="GO" id="GO:0005524">
    <property type="term" value="F:ATP binding"/>
    <property type="evidence" value="ECO:0007669"/>
    <property type="project" value="UniProtKB-UniRule"/>
</dbReference>
<dbReference type="GO" id="GO:0004798">
    <property type="term" value="F:dTMP kinase activity"/>
    <property type="evidence" value="ECO:0000318"/>
    <property type="project" value="GO_Central"/>
</dbReference>
<dbReference type="GO" id="GO:0006233">
    <property type="term" value="P:dTDP biosynthetic process"/>
    <property type="evidence" value="ECO:0000318"/>
    <property type="project" value="GO_Central"/>
</dbReference>
<dbReference type="GO" id="GO:0006235">
    <property type="term" value="P:dTTP biosynthetic process"/>
    <property type="evidence" value="ECO:0000318"/>
    <property type="project" value="GO_Central"/>
</dbReference>
<dbReference type="GO" id="GO:0006227">
    <property type="term" value="P:dUDP biosynthetic process"/>
    <property type="evidence" value="ECO:0000318"/>
    <property type="project" value="GO_Central"/>
</dbReference>
<dbReference type="CDD" id="cd01672">
    <property type="entry name" value="TMPK"/>
    <property type="match status" value="1"/>
</dbReference>
<dbReference type="FunFam" id="3.40.50.300:FF:000225">
    <property type="entry name" value="Thymidylate kinase"/>
    <property type="match status" value="1"/>
</dbReference>
<dbReference type="Gene3D" id="3.40.50.300">
    <property type="entry name" value="P-loop containing nucleotide triphosphate hydrolases"/>
    <property type="match status" value="1"/>
</dbReference>
<dbReference type="HAMAP" id="MF_00165">
    <property type="entry name" value="Thymidylate_kinase"/>
    <property type="match status" value="1"/>
</dbReference>
<dbReference type="InterPro" id="IPR027417">
    <property type="entry name" value="P-loop_NTPase"/>
</dbReference>
<dbReference type="InterPro" id="IPR039430">
    <property type="entry name" value="Thymidylate_kin-like_dom"/>
</dbReference>
<dbReference type="InterPro" id="IPR018095">
    <property type="entry name" value="Thymidylate_kin_CS"/>
</dbReference>
<dbReference type="InterPro" id="IPR018094">
    <property type="entry name" value="Thymidylate_kinase"/>
</dbReference>
<dbReference type="NCBIfam" id="TIGR00041">
    <property type="entry name" value="DTMP_kinase"/>
    <property type="match status" value="1"/>
</dbReference>
<dbReference type="PANTHER" id="PTHR10344">
    <property type="entry name" value="THYMIDYLATE KINASE"/>
    <property type="match status" value="1"/>
</dbReference>
<dbReference type="PANTHER" id="PTHR10344:SF4">
    <property type="entry name" value="UMP-CMP KINASE 2, MITOCHONDRIAL"/>
    <property type="match status" value="1"/>
</dbReference>
<dbReference type="Pfam" id="PF02223">
    <property type="entry name" value="Thymidylate_kin"/>
    <property type="match status" value="1"/>
</dbReference>
<dbReference type="SUPFAM" id="SSF52540">
    <property type="entry name" value="P-loop containing nucleoside triphosphate hydrolases"/>
    <property type="match status" value="1"/>
</dbReference>
<dbReference type="PROSITE" id="PS01331">
    <property type="entry name" value="THYMIDYLATE_KINASE"/>
    <property type="match status" value="1"/>
</dbReference>
<organism>
    <name type="scientific">Aquifex aeolicus (strain VF5)</name>
    <dbReference type="NCBI Taxonomy" id="224324"/>
    <lineage>
        <taxon>Bacteria</taxon>
        <taxon>Pseudomonadati</taxon>
        <taxon>Aquificota</taxon>
        <taxon>Aquificia</taxon>
        <taxon>Aquificales</taxon>
        <taxon>Aquificaceae</taxon>
        <taxon>Aquifex</taxon>
    </lineage>
</organism>
<keyword id="KW-0002">3D-structure</keyword>
<keyword id="KW-0067">ATP-binding</keyword>
<keyword id="KW-0418">Kinase</keyword>
<keyword id="KW-0545">Nucleotide biosynthesis</keyword>
<keyword id="KW-0547">Nucleotide-binding</keyword>
<keyword id="KW-1185">Reference proteome</keyword>
<keyword id="KW-0808">Transferase</keyword>
<feature type="chain" id="PRO_0000155230" description="Thymidylate kinase">
    <location>
        <begin position="1"/>
        <end position="195"/>
    </location>
</feature>
<feature type="binding site" evidence="2">
    <location>
        <begin position="7"/>
        <end position="14"/>
    </location>
    <ligand>
        <name>ATP</name>
        <dbReference type="ChEBI" id="CHEBI:30616"/>
    </ligand>
</feature>
<feature type="strand" evidence="4">
    <location>
        <begin position="2"/>
        <end position="6"/>
    </location>
</feature>
<feature type="helix" evidence="4">
    <location>
        <begin position="13"/>
        <end position="26"/>
    </location>
</feature>
<feature type="strand" evidence="4">
    <location>
        <begin position="31"/>
        <end position="37"/>
    </location>
</feature>
<feature type="helix" evidence="4">
    <location>
        <begin position="41"/>
        <end position="52"/>
    </location>
</feature>
<feature type="helix" evidence="4">
    <location>
        <begin position="57"/>
        <end position="74"/>
    </location>
</feature>
<feature type="helix" evidence="4">
    <location>
        <begin position="76"/>
        <end position="81"/>
    </location>
</feature>
<feature type="strand" evidence="4">
    <location>
        <begin position="85"/>
        <end position="90"/>
    </location>
</feature>
<feature type="helix" evidence="4">
    <location>
        <begin position="92"/>
        <end position="99"/>
    </location>
</feature>
<feature type="turn" evidence="4">
    <location>
        <begin position="100"/>
        <end position="103"/>
    </location>
</feature>
<feature type="helix" evidence="4">
    <location>
        <begin position="107"/>
        <end position="118"/>
    </location>
</feature>
<feature type="strand" evidence="4">
    <location>
        <begin position="124"/>
        <end position="130"/>
    </location>
</feature>
<feature type="helix" evidence="4">
    <location>
        <begin position="133"/>
        <end position="138"/>
    </location>
</feature>
<feature type="turn" evidence="5">
    <location>
        <begin position="142"/>
        <end position="144"/>
    </location>
</feature>
<feature type="helix" evidence="4">
    <location>
        <begin position="149"/>
        <end position="165"/>
    </location>
</feature>
<feature type="strand" evidence="4">
    <location>
        <begin position="166"/>
        <end position="173"/>
    </location>
</feature>
<feature type="helix" evidence="4">
    <location>
        <begin position="178"/>
        <end position="189"/>
    </location>
</feature>
<feature type="turn" evidence="4">
    <location>
        <begin position="190"/>
        <end position="192"/>
    </location>
</feature>
<gene>
    <name type="primary">tmk</name>
    <name type="ordered locus">aq_969</name>
</gene>